<gene>
    <name evidence="2" type="primary">infC</name>
    <name type="ordered locus">BH3140</name>
</gene>
<protein>
    <recommendedName>
        <fullName evidence="2">Translation initiation factor IF-3</fullName>
    </recommendedName>
</protein>
<keyword id="KW-0963">Cytoplasm</keyword>
<keyword id="KW-0396">Initiation factor</keyword>
<keyword id="KW-0648">Protein biosynthesis</keyword>
<keyword id="KW-1185">Reference proteome</keyword>
<name>IF3_HALH5</name>
<feature type="initiator methionine" description="Removed" evidence="1">
    <location>
        <position position="1"/>
    </location>
</feature>
<feature type="chain" id="PRO_0000177479" description="Translation initiation factor IF-3">
    <location>
        <begin position="2"/>
        <end position="171"/>
    </location>
</feature>
<organism>
    <name type="scientific">Halalkalibacterium halodurans (strain ATCC BAA-125 / DSM 18197 / FERM 7344 / JCM 9153 / C-125)</name>
    <name type="common">Bacillus halodurans</name>
    <dbReference type="NCBI Taxonomy" id="272558"/>
    <lineage>
        <taxon>Bacteria</taxon>
        <taxon>Bacillati</taxon>
        <taxon>Bacillota</taxon>
        <taxon>Bacilli</taxon>
        <taxon>Bacillales</taxon>
        <taxon>Bacillaceae</taxon>
        <taxon>Halalkalibacterium (ex Joshi et al. 2022)</taxon>
    </lineage>
</organism>
<reference key="1">
    <citation type="journal article" date="2000" name="Nucleic Acids Res.">
        <title>Complete genome sequence of the alkaliphilic bacterium Bacillus halodurans and genomic sequence comparison with Bacillus subtilis.</title>
        <authorList>
            <person name="Takami H."/>
            <person name="Nakasone K."/>
            <person name="Takaki Y."/>
            <person name="Maeno G."/>
            <person name="Sasaki R."/>
            <person name="Masui N."/>
            <person name="Fuji F."/>
            <person name="Hirama C."/>
            <person name="Nakamura Y."/>
            <person name="Ogasawara N."/>
            <person name="Kuhara S."/>
            <person name="Horikoshi K."/>
        </authorList>
    </citation>
    <scope>NUCLEOTIDE SEQUENCE [LARGE SCALE GENOMIC DNA]</scope>
    <source>
        <strain>ATCC BAA-125 / DSM 18197 / FERM 7344 / JCM 9153 / C-125</strain>
    </source>
</reference>
<evidence type="ECO:0000250" key="1"/>
<evidence type="ECO:0000255" key="2">
    <source>
        <dbReference type="HAMAP-Rule" id="MF_00080"/>
    </source>
</evidence>
<evidence type="ECO:0000305" key="3"/>
<comment type="function">
    <text evidence="2">IF-3 binds to the 30S ribosomal subunit and shifts the equilibrium between 70S ribosomes and their 50S and 30S subunits in favor of the free subunits, thus enhancing the availability of 30S subunits on which protein synthesis initiation begins.</text>
</comment>
<comment type="subunit">
    <text evidence="2">Monomer.</text>
</comment>
<comment type="subcellular location">
    <subcellularLocation>
        <location evidence="2">Cytoplasm</location>
    </subcellularLocation>
</comment>
<comment type="similarity">
    <text evidence="2">Belongs to the IF-3 family.</text>
</comment>
<comment type="sequence caution" evidence="3">
    <conflict type="erroneous initiation">
        <sequence resource="EMBL-CDS" id="BAB06859"/>
    </conflict>
</comment>
<dbReference type="EMBL" id="BA000004">
    <property type="protein sequence ID" value="BAB06859.1"/>
    <property type="status" value="ALT_INIT"/>
    <property type="molecule type" value="Genomic_DNA"/>
</dbReference>
<dbReference type="PIR" id="D84042">
    <property type="entry name" value="D84042"/>
</dbReference>
<dbReference type="SMR" id="Q9K867"/>
<dbReference type="STRING" id="272558.gene:10729052"/>
<dbReference type="KEGG" id="bha:BH3140"/>
<dbReference type="eggNOG" id="COG0290">
    <property type="taxonomic scope" value="Bacteria"/>
</dbReference>
<dbReference type="HOGENOM" id="CLU_054919_3_2_9"/>
<dbReference type="Proteomes" id="UP000001258">
    <property type="component" value="Chromosome"/>
</dbReference>
<dbReference type="GO" id="GO:0005829">
    <property type="term" value="C:cytosol"/>
    <property type="evidence" value="ECO:0007669"/>
    <property type="project" value="TreeGrafter"/>
</dbReference>
<dbReference type="GO" id="GO:0016020">
    <property type="term" value="C:membrane"/>
    <property type="evidence" value="ECO:0007669"/>
    <property type="project" value="TreeGrafter"/>
</dbReference>
<dbReference type="GO" id="GO:0043022">
    <property type="term" value="F:ribosome binding"/>
    <property type="evidence" value="ECO:0007669"/>
    <property type="project" value="TreeGrafter"/>
</dbReference>
<dbReference type="GO" id="GO:0003743">
    <property type="term" value="F:translation initiation factor activity"/>
    <property type="evidence" value="ECO:0007669"/>
    <property type="project" value="UniProtKB-UniRule"/>
</dbReference>
<dbReference type="GO" id="GO:0032790">
    <property type="term" value="P:ribosome disassembly"/>
    <property type="evidence" value="ECO:0007669"/>
    <property type="project" value="TreeGrafter"/>
</dbReference>
<dbReference type="FunFam" id="3.10.20.80:FF:000001">
    <property type="entry name" value="Translation initiation factor IF-3"/>
    <property type="match status" value="1"/>
</dbReference>
<dbReference type="FunFam" id="3.30.110.10:FF:000001">
    <property type="entry name" value="Translation initiation factor IF-3"/>
    <property type="match status" value="1"/>
</dbReference>
<dbReference type="Gene3D" id="3.30.110.10">
    <property type="entry name" value="Translation initiation factor 3 (IF-3), C-terminal domain"/>
    <property type="match status" value="1"/>
</dbReference>
<dbReference type="Gene3D" id="3.10.20.80">
    <property type="entry name" value="Translation initiation factor 3 (IF-3), N-terminal domain"/>
    <property type="match status" value="1"/>
</dbReference>
<dbReference type="HAMAP" id="MF_00080">
    <property type="entry name" value="IF_3"/>
    <property type="match status" value="1"/>
</dbReference>
<dbReference type="InterPro" id="IPR036788">
    <property type="entry name" value="T_IF-3_C_sf"/>
</dbReference>
<dbReference type="InterPro" id="IPR036787">
    <property type="entry name" value="T_IF-3_N_sf"/>
</dbReference>
<dbReference type="InterPro" id="IPR019813">
    <property type="entry name" value="Translation_initiation_fac3_CS"/>
</dbReference>
<dbReference type="InterPro" id="IPR001288">
    <property type="entry name" value="Translation_initiation_fac_3"/>
</dbReference>
<dbReference type="InterPro" id="IPR019815">
    <property type="entry name" value="Translation_initiation_fac_3_C"/>
</dbReference>
<dbReference type="InterPro" id="IPR019814">
    <property type="entry name" value="Translation_initiation_fac_3_N"/>
</dbReference>
<dbReference type="NCBIfam" id="TIGR00168">
    <property type="entry name" value="infC"/>
    <property type="match status" value="1"/>
</dbReference>
<dbReference type="PANTHER" id="PTHR10938">
    <property type="entry name" value="TRANSLATION INITIATION FACTOR IF-3"/>
    <property type="match status" value="1"/>
</dbReference>
<dbReference type="PANTHER" id="PTHR10938:SF0">
    <property type="entry name" value="TRANSLATION INITIATION FACTOR IF-3, MITOCHONDRIAL"/>
    <property type="match status" value="1"/>
</dbReference>
<dbReference type="Pfam" id="PF00707">
    <property type="entry name" value="IF3_C"/>
    <property type="match status" value="1"/>
</dbReference>
<dbReference type="Pfam" id="PF05198">
    <property type="entry name" value="IF3_N"/>
    <property type="match status" value="1"/>
</dbReference>
<dbReference type="SUPFAM" id="SSF55200">
    <property type="entry name" value="Translation initiation factor IF3, C-terminal domain"/>
    <property type="match status" value="1"/>
</dbReference>
<dbReference type="SUPFAM" id="SSF54364">
    <property type="entry name" value="Translation initiation factor IF3, N-terminal domain"/>
    <property type="match status" value="1"/>
</dbReference>
<dbReference type="PROSITE" id="PS00938">
    <property type="entry name" value="IF3"/>
    <property type="match status" value="1"/>
</dbReference>
<sequence length="171" mass="19423">MSKDMLVNEGIRAREVRLIGANGDQIGVKSKAEALDMARNVNLDLVCVAPNAKPPVCRIMDYGKYRYEQQKKDKEARKKQKTINVKEVRLSPTIEDHDFNTKLRNARKFLSKGDKVKAAIRFRGRAITHSEIGRNVLERLAKECEDIAIVEAKPKMEGRSMFLVLAPKTDK</sequence>
<accession>Q9K867</accession>
<proteinExistence type="inferred from homology"/>